<keyword id="KW-0001">2Fe-2S</keyword>
<keyword id="KW-0963">Cytoplasm</keyword>
<keyword id="KW-0408">Iron</keyword>
<keyword id="KW-0411">Iron-sulfur</keyword>
<keyword id="KW-0479">Metal-binding</keyword>
<keyword id="KW-0663">Pyridoxal phosphate</keyword>
<keyword id="KW-0808">Transferase</keyword>
<sequence>MKLPIYLDYSATTPVDPRVAEKMMQFMTMDGTFGNPASRSHRFGWQAEEAVDIARNQIADLVGADPREIVFTSGATESDNLAIKGAANFYQKKGKHIITSKTEHKAVLDTCRQLEREGFEVTYLAPQRNGIIDLKELEAAMRDDTILVSIMHVNNEIGVVQDIAAIGEMCRARGIIYHVDATQSVGKLPIDLSQLKVDLMSFSGHKIYGPKGIGALYVRRKPRVRIEAQMHGGGHERGMRSGTLPVHQIVGMGEAYRIAKEEMATEMERLRGLRNRLWNGIKDIEEVYLNGDLEHGAPNILNVSFNYVEGESLIMALKDLAVSSGSACTSASLEPSYVLRALGLNDELAHSSIRFSLGRFTTEEEIDYTIELVRKSIGRLRDLSPLWEMYKQGVDLNSIEWAHH</sequence>
<dbReference type="EC" id="2.8.1.7" evidence="1"/>
<dbReference type="EMBL" id="CP001164">
    <property type="protein sequence ID" value="ACI37255.1"/>
    <property type="molecule type" value="Genomic_DNA"/>
</dbReference>
<dbReference type="RefSeq" id="WP_001295373.1">
    <property type="nucleotide sequence ID" value="NC_011353.1"/>
</dbReference>
<dbReference type="SMR" id="B5Z104"/>
<dbReference type="GeneID" id="93774606"/>
<dbReference type="KEGG" id="ecf:ECH74115_3762"/>
<dbReference type="HOGENOM" id="CLU_003433_0_2_6"/>
<dbReference type="UniPathway" id="UPA00266"/>
<dbReference type="GO" id="GO:1990221">
    <property type="term" value="C:L-cysteine desulfurase complex"/>
    <property type="evidence" value="ECO:0007669"/>
    <property type="project" value="UniProtKB-ARBA"/>
</dbReference>
<dbReference type="GO" id="GO:0051537">
    <property type="term" value="F:2 iron, 2 sulfur cluster binding"/>
    <property type="evidence" value="ECO:0007669"/>
    <property type="project" value="UniProtKB-UniRule"/>
</dbReference>
<dbReference type="GO" id="GO:0031071">
    <property type="term" value="F:cysteine desulfurase activity"/>
    <property type="evidence" value="ECO:0007669"/>
    <property type="project" value="UniProtKB-UniRule"/>
</dbReference>
<dbReference type="GO" id="GO:0046872">
    <property type="term" value="F:metal ion binding"/>
    <property type="evidence" value="ECO:0007669"/>
    <property type="project" value="UniProtKB-KW"/>
</dbReference>
<dbReference type="GO" id="GO:0030170">
    <property type="term" value="F:pyridoxal phosphate binding"/>
    <property type="evidence" value="ECO:0007669"/>
    <property type="project" value="UniProtKB-UniRule"/>
</dbReference>
<dbReference type="GO" id="GO:0044571">
    <property type="term" value="P:[2Fe-2S] cluster assembly"/>
    <property type="evidence" value="ECO:0007669"/>
    <property type="project" value="UniProtKB-UniRule"/>
</dbReference>
<dbReference type="FunFam" id="3.40.640.10:FF:000003">
    <property type="entry name" value="Cysteine desulfurase IscS"/>
    <property type="match status" value="1"/>
</dbReference>
<dbReference type="FunFam" id="3.90.1150.10:FF:000002">
    <property type="entry name" value="Cysteine desulfurase IscS"/>
    <property type="match status" value="1"/>
</dbReference>
<dbReference type="Gene3D" id="3.90.1150.10">
    <property type="entry name" value="Aspartate Aminotransferase, domain 1"/>
    <property type="match status" value="1"/>
</dbReference>
<dbReference type="Gene3D" id="3.40.640.10">
    <property type="entry name" value="Type I PLP-dependent aspartate aminotransferase-like (Major domain)"/>
    <property type="match status" value="1"/>
</dbReference>
<dbReference type="HAMAP" id="MF_00331">
    <property type="entry name" value="Cys_desulf_IscS"/>
    <property type="match status" value="1"/>
</dbReference>
<dbReference type="InterPro" id="IPR000192">
    <property type="entry name" value="Aminotrans_V_dom"/>
</dbReference>
<dbReference type="InterPro" id="IPR020578">
    <property type="entry name" value="Aminotrans_V_PyrdxlP_BS"/>
</dbReference>
<dbReference type="InterPro" id="IPR010240">
    <property type="entry name" value="Cys_deSase_IscS"/>
</dbReference>
<dbReference type="InterPro" id="IPR016454">
    <property type="entry name" value="Cysteine_dSase"/>
</dbReference>
<dbReference type="InterPro" id="IPR015424">
    <property type="entry name" value="PyrdxlP-dep_Trfase"/>
</dbReference>
<dbReference type="InterPro" id="IPR015421">
    <property type="entry name" value="PyrdxlP-dep_Trfase_major"/>
</dbReference>
<dbReference type="InterPro" id="IPR015422">
    <property type="entry name" value="PyrdxlP-dep_Trfase_small"/>
</dbReference>
<dbReference type="NCBIfam" id="TIGR02006">
    <property type="entry name" value="IscS"/>
    <property type="match status" value="1"/>
</dbReference>
<dbReference type="NCBIfam" id="NF002806">
    <property type="entry name" value="PRK02948.1"/>
    <property type="match status" value="1"/>
</dbReference>
<dbReference type="NCBIfam" id="NF010611">
    <property type="entry name" value="PRK14012.1"/>
    <property type="match status" value="1"/>
</dbReference>
<dbReference type="PANTHER" id="PTHR11601:SF34">
    <property type="entry name" value="CYSTEINE DESULFURASE"/>
    <property type="match status" value="1"/>
</dbReference>
<dbReference type="PANTHER" id="PTHR11601">
    <property type="entry name" value="CYSTEINE DESULFURYLASE FAMILY MEMBER"/>
    <property type="match status" value="1"/>
</dbReference>
<dbReference type="Pfam" id="PF00266">
    <property type="entry name" value="Aminotran_5"/>
    <property type="match status" value="1"/>
</dbReference>
<dbReference type="PIRSF" id="PIRSF005572">
    <property type="entry name" value="NifS"/>
    <property type="match status" value="1"/>
</dbReference>
<dbReference type="SUPFAM" id="SSF53383">
    <property type="entry name" value="PLP-dependent transferases"/>
    <property type="match status" value="1"/>
</dbReference>
<dbReference type="PROSITE" id="PS00595">
    <property type="entry name" value="AA_TRANSFER_CLASS_5"/>
    <property type="match status" value="1"/>
</dbReference>
<comment type="function">
    <text evidence="1">Master enzyme that delivers sulfur to a number of partners involved in Fe-S cluster assembly, tRNA modification or cofactor biosynthesis. Catalyzes the removal of elemental sulfur and selenium atoms from cysteine and selenocysteine to produce alanine. Functions as a sulfur delivery protein for Fe-S cluster synthesis onto IscU, an Fe-S scaffold assembly protein, as well as other S acceptor proteins. Also functions as a selenium delivery protein in the pathway for the biosynthesis of selenophosphate.</text>
</comment>
<comment type="catalytic activity">
    <reaction evidence="1">
        <text>(sulfur carrier)-H + L-cysteine = (sulfur carrier)-SH + L-alanine</text>
        <dbReference type="Rhea" id="RHEA:43892"/>
        <dbReference type="Rhea" id="RHEA-COMP:14737"/>
        <dbReference type="Rhea" id="RHEA-COMP:14739"/>
        <dbReference type="ChEBI" id="CHEBI:29917"/>
        <dbReference type="ChEBI" id="CHEBI:35235"/>
        <dbReference type="ChEBI" id="CHEBI:57972"/>
        <dbReference type="ChEBI" id="CHEBI:64428"/>
        <dbReference type="EC" id="2.8.1.7"/>
    </reaction>
</comment>
<comment type="cofactor">
    <cofactor evidence="1">
        <name>pyridoxal 5'-phosphate</name>
        <dbReference type="ChEBI" id="CHEBI:597326"/>
    </cofactor>
</comment>
<comment type="pathway">
    <text evidence="1">Cofactor biosynthesis; iron-sulfur cluster biosynthesis.</text>
</comment>
<comment type="subunit">
    <text evidence="1">Homodimer. Forms a heterotetramer with IscU, interacts with other sulfur acceptors.</text>
</comment>
<comment type="subcellular location">
    <subcellularLocation>
        <location evidence="1">Cytoplasm</location>
    </subcellularLocation>
</comment>
<comment type="similarity">
    <text evidence="1">Belongs to the class-V pyridoxal-phosphate-dependent aminotransferase family. NifS/IscS subfamily.</text>
</comment>
<evidence type="ECO:0000255" key="1">
    <source>
        <dbReference type="HAMAP-Rule" id="MF_00331"/>
    </source>
</evidence>
<reference key="1">
    <citation type="journal article" date="2011" name="Proc. Natl. Acad. Sci. U.S.A.">
        <title>Genomic anatomy of Escherichia coli O157:H7 outbreaks.</title>
        <authorList>
            <person name="Eppinger M."/>
            <person name="Mammel M.K."/>
            <person name="Leclerc J.E."/>
            <person name="Ravel J."/>
            <person name="Cebula T.A."/>
        </authorList>
    </citation>
    <scope>NUCLEOTIDE SEQUENCE [LARGE SCALE GENOMIC DNA]</scope>
    <source>
        <strain>EC4115 / EHEC</strain>
    </source>
</reference>
<protein>
    <recommendedName>
        <fullName evidence="1">Cysteine desulfurase IscS</fullName>
        <ecNumber evidence="1">2.8.1.7</ecNumber>
    </recommendedName>
</protein>
<gene>
    <name evidence="1" type="primary">iscS</name>
    <name type="ordered locus">ECH74115_3762</name>
</gene>
<name>ISCS_ECO5E</name>
<organism>
    <name type="scientific">Escherichia coli O157:H7 (strain EC4115 / EHEC)</name>
    <dbReference type="NCBI Taxonomy" id="444450"/>
    <lineage>
        <taxon>Bacteria</taxon>
        <taxon>Pseudomonadati</taxon>
        <taxon>Pseudomonadota</taxon>
        <taxon>Gammaproteobacteria</taxon>
        <taxon>Enterobacterales</taxon>
        <taxon>Enterobacteriaceae</taxon>
        <taxon>Escherichia</taxon>
    </lineage>
</organism>
<feature type="chain" id="PRO_1000119622" description="Cysteine desulfurase IscS">
    <location>
        <begin position="1"/>
        <end position="404"/>
    </location>
</feature>
<feature type="active site" description="Cysteine persulfide intermediate" evidence="1">
    <location>
        <position position="328"/>
    </location>
</feature>
<feature type="binding site" evidence="1">
    <location>
        <begin position="75"/>
        <end position="76"/>
    </location>
    <ligand>
        <name>pyridoxal 5'-phosphate</name>
        <dbReference type="ChEBI" id="CHEBI:597326"/>
    </ligand>
</feature>
<feature type="binding site" evidence="1">
    <location>
        <position position="155"/>
    </location>
    <ligand>
        <name>pyridoxal 5'-phosphate</name>
        <dbReference type="ChEBI" id="CHEBI:597326"/>
    </ligand>
</feature>
<feature type="binding site" evidence="1">
    <location>
        <position position="183"/>
    </location>
    <ligand>
        <name>pyridoxal 5'-phosphate</name>
        <dbReference type="ChEBI" id="CHEBI:597326"/>
    </ligand>
</feature>
<feature type="binding site" evidence="1">
    <location>
        <begin position="203"/>
        <end position="205"/>
    </location>
    <ligand>
        <name>pyridoxal 5'-phosphate</name>
        <dbReference type="ChEBI" id="CHEBI:597326"/>
    </ligand>
</feature>
<feature type="binding site" evidence="1">
    <location>
        <position position="243"/>
    </location>
    <ligand>
        <name>pyridoxal 5'-phosphate</name>
        <dbReference type="ChEBI" id="CHEBI:597326"/>
    </ligand>
</feature>
<feature type="binding site" description="via persulfide group" evidence="1">
    <location>
        <position position="328"/>
    </location>
    <ligand>
        <name>[2Fe-2S] cluster</name>
        <dbReference type="ChEBI" id="CHEBI:190135"/>
        <note>ligand shared with IscU</note>
    </ligand>
</feature>
<feature type="modified residue" description="N6-(pyridoxal phosphate)lysine" evidence="1">
    <location>
        <position position="206"/>
    </location>
</feature>
<proteinExistence type="inferred from homology"/>
<accession>B5Z104</accession>